<comment type="function">
    <text evidence="1">Purine salvage pathway enzyme that catalyzes the transfer of the ribosyl-5-phosphate group from 5-phospho-alpha-D-ribose 1-diphosphate (PRPP) to the N9 position of the 6-oxopurines guanine and xanthine to form the corresponding ribonucleotides GMP (guanosine 5'-monophosphate) and XMP (xanthosine 5'-monophosphate), with the release of PPi. To a lesser extent, also acts on hypoxanthine.</text>
</comment>
<comment type="catalytic activity">
    <reaction evidence="1">
        <text>GMP + diphosphate = guanine + 5-phospho-alpha-D-ribose 1-diphosphate</text>
        <dbReference type="Rhea" id="RHEA:25424"/>
        <dbReference type="ChEBI" id="CHEBI:16235"/>
        <dbReference type="ChEBI" id="CHEBI:33019"/>
        <dbReference type="ChEBI" id="CHEBI:58017"/>
        <dbReference type="ChEBI" id="CHEBI:58115"/>
    </reaction>
    <physiologicalReaction direction="right-to-left" evidence="1">
        <dbReference type="Rhea" id="RHEA:25426"/>
    </physiologicalReaction>
</comment>
<comment type="catalytic activity">
    <reaction evidence="1">
        <text>XMP + diphosphate = xanthine + 5-phospho-alpha-D-ribose 1-diphosphate</text>
        <dbReference type="Rhea" id="RHEA:10800"/>
        <dbReference type="ChEBI" id="CHEBI:17712"/>
        <dbReference type="ChEBI" id="CHEBI:33019"/>
        <dbReference type="ChEBI" id="CHEBI:57464"/>
        <dbReference type="ChEBI" id="CHEBI:58017"/>
        <dbReference type="EC" id="2.4.2.22"/>
    </reaction>
    <physiologicalReaction direction="right-to-left" evidence="1">
        <dbReference type="Rhea" id="RHEA:10802"/>
    </physiologicalReaction>
</comment>
<comment type="catalytic activity">
    <reaction evidence="1">
        <text>IMP + diphosphate = hypoxanthine + 5-phospho-alpha-D-ribose 1-diphosphate</text>
        <dbReference type="Rhea" id="RHEA:17973"/>
        <dbReference type="ChEBI" id="CHEBI:17368"/>
        <dbReference type="ChEBI" id="CHEBI:33019"/>
        <dbReference type="ChEBI" id="CHEBI:58017"/>
        <dbReference type="ChEBI" id="CHEBI:58053"/>
    </reaction>
    <physiologicalReaction direction="right-to-left" evidence="1">
        <dbReference type="Rhea" id="RHEA:17975"/>
    </physiologicalReaction>
</comment>
<comment type="cofactor">
    <cofactor evidence="1">
        <name>Mg(2+)</name>
        <dbReference type="ChEBI" id="CHEBI:18420"/>
    </cofactor>
</comment>
<comment type="pathway">
    <text evidence="1">Purine metabolism; GMP biosynthesis via salvage pathway; GMP from guanine: step 1/1.</text>
</comment>
<comment type="pathway">
    <text evidence="1">Purine metabolism; XMP biosynthesis via salvage pathway; XMP from xanthine: step 1/1.</text>
</comment>
<comment type="subunit">
    <text evidence="1">Homotetramer.</text>
</comment>
<comment type="subcellular location">
    <subcellularLocation>
        <location evidence="1">Cell inner membrane</location>
        <topology evidence="1">Peripheral membrane protein</topology>
    </subcellularLocation>
</comment>
<comment type="similarity">
    <text evidence="1">Belongs to the purine/pyrimidine phosphoribosyltransferase family. XGPT subfamily.</text>
</comment>
<accession>A3MYX7</accession>
<gene>
    <name evidence="1" type="primary">gpt</name>
    <name type="ordered locus">APL_0255</name>
</gene>
<organism>
    <name type="scientific">Actinobacillus pleuropneumoniae serotype 5b (strain L20)</name>
    <dbReference type="NCBI Taxonomy" id="416269"/>
    <lineage>
        <taxon>Bacteria</taxon>
        <taxon>Pseudomonadati</taxon>
        <taxon>Pseudomonadota</taxon>
        <taxon>Gammaproteobacteria</taxon>
        <taxon>Pasteurellales</taxon>
        <taxon>Pasteurellaceae</taxon>
        <taxon>Actinobacillus</taxon>
    </lineage>
</organism>
<reference key="1">
    <citation type="journal article" date="2008" name="J. Bacteriol.">
        <title>The complete genome sequence of Actinobacillus pleuropneumoniae L20 (serotype 5b).</title>
        <authorList>
            <person name="Foote S.J."/>
            <person name="Bosse J.T."/>
            <person name="Bouevitch A.B."/>
            <person name="Langford P.R."/>
            <person name="Young N.M."/>
            <person name="Nash J.H.E."/>
        </authorList>
    </citation>
    <scope>NUCLEOTIDE SEQUENCE [LARGE SCALE GENOMIC DNA]</scope>
    <source>
        <strain>L20</strain>
    </source>
</reference>
<name>XGPT_ACTP2</name>
<sequence length="157" mass="17726">MSEKYTNEKYVVTWDMFHMHARKLAERLLPASQWKGIIAVSRGGLFPAAVLARELSIRHVETVCISSYDHDEQGELKVLHAAQTDGEGFIVVDDLVDTGNTAKEIRKMYPKAKFVTVFAKPAGTPLVDDYVIDIPQETWIEQPWDLGITFVPPLARK</sequence>
<proteinExistence type="inferred from homology"/>
<keyword id="KW-0997">Cell inner membrane</keyword>
<keyword id="KW-1003">Cell membrane</keyword>
<keyword id="KW-0328">Glycosyltransferase</keyword>
<keyword id="KW-0460">Magnesium</keyword>
<keyword id="KW-0472">Membrane</keyword>
<keyword id="KW-0479">Metal-binding</keyword>
<keyword id="KW-0660">Purine salvage</keyword>
<keyword id="KW-1185">Reference proteome</keyword>
<keyword id="KW-0808">Transferase</keyword>
<evidence type="ECO:0000255" key="1">
    <source>
        <dbReference type="HAMAP-Rule" id="MF_01903"/>
    </source>
</evidence>
<dbReference type="EC" id="2.4.2.-" evidence="1"/>
<dbReference type="EC" id="2.4.2.22" evidence="1"/>
<dbReference type="EMBL" id="CP000569">
    <property type="protein sequence ID" value="ABN73363.1"/>
    <property type="molecule type" value="Genomic_DNA"/>
</dbReference>
<dbReference type="RefSeq" id="WP_005596130.1">
    <property type="nucleotide sequence ID" value="NC_009053.1"/>
</dbReference>
<dbReference type="SMR" id="A3MYX7"/>
<dbReference type="STRING" id="416269.APL_0255"/>
<dbReference type="EnsemblBacteria" id="ABN73363">
    <property type="protein sequence ID" value="ABN73363"/>
    <property type="gene ID" value="APL_0255"/>
</dbReference>
<dbReference type="GeneID" id="48598408"/>
<dbReference type="KEGG" id="apl:APL_0255"/>
<dbReference type="eggNOG" id="COG2236">
    <property type="taxonomic scope" value="Bacteria"/>
</dbReference>
<dbReference type="HOGENOM" id="CLU_080904_3_0_6"/>
<dbReference type="UniPathway" id="UPA00602">
    <property type="reaction ID" value="UER00658"/>
</dbReference>
<dbReference type="UniPathway" id="UPA00909">
    <property type="reaction ID" value="UER00887"/>
</dbReference>
<dbReference type="Proteomes" id="UP000001432">
    <property type="component" value="Chromosome"/>
</dbReference>
<dbReference type="GO" id="GO:0005829">
    <property type="term" value="C:cytosol"/>
    <property type="evidence" value="ECO:0007669"/>
    <property type="project" value="TreeGrafter"/>
</dbReference>
<dbReference type="GO" id="GO:0005886">
    <property type="term" value="C:plasma membrane"/>
    <property type="evidence" value="ECO:0007669"/>
    <property type="project" value="UniProtKB-SubCell"/>
</dbReference>
<dbReference type="GO" id="GO:0052657">
    <property type="term" value="F:guanine phosphoribosyltransferase activity"/>
    <property type="evidence" value="ECO:0007669"/>
    <property type="project" value="RHEA"/>
</dbReference>
<dbReference type="GO" id="GO:0004422">
    <property type="term" value="F:hypoxanthine phosphoribosyltransferase activity"/>
    <property type="evidence" value="ECO:0007669"/>
    <property type="project" value="TreeGrafter"/>
</dbReference>
<dbReference type="GO" id="GO:0000287">
    <property type="term" value="F:magnesium ion binding"/>
    <property type="evidence" value="ECO:0007669"/>
    <property type="project" value="UniProtKB-UniRule"/>
</dbReference>
<dbReference type="GO" id="GO:0000310">
    <property type="term" value="F:xanthine phosphoribosyltransferase activity"/>
    <property type="evidence" value="ECO:0007669"/>
    <property type="project" value="UniProtKB-UniRule"/>
</dbReference>
<dbReference type="GO" id="GO:0032263">
    <property type="term" value="P:GMP salvage"/>
    <property type="evidence" value="ECO:0007669"/>
    <property type="project" value="UniProtKB-UniRule"/>
</dbReference>
<dbReference type="GO" id="GO:0032264">
    <property type="term" value="P:IMP salvage"/>
    <property type="evidence" value="ECO:0007669"/>
    <property type="project" value="TreeGrafter"/>
</dbReference>
<dbReference type="GO" id="GO:0006166">
    <property type="term" value="P:purine ribonucleoside salvage"/>
    <property type="evidence" value="ECO:0007669"/>
    <property type="project" value="UniProtKB-KW"/>
</dbReference>
<dbReference type="GO" id="GO:0032265">
    <property type="term" value="P:XMP salvage"/>
    <property type="evidence" value="ECO:0007669"/>
    <property type="project" value="UniProtKB-UniRule"/>
</dbReference>
<dbReference type="CDD" id="cd06223">
    <property type="entry name" value="PRTases_typeI"/>
    <property type="match status" value="1"/>
</dbReference>
<dbReference type="FunFam" id="3.40.50.2020:FF:000009">
    <property type="entry name" value="Xanthine phosphoribosyltransferase"/>
    <property type="match status" value="1"/>
</dbReference>
<dbReference type="Gene3D" id="3.40.50.2020">
    <property type="match status" value="1"/>
</dbReference>
<dbReference type="HAMAP" id="MF_01903">
    <property type="entry name" value="XGPRT"/>
    <property type="match status" value="1"/>
</dbReference>
<dbReference type="InterPro" id="IPR000836">
    <property type="entry name" value="PRibTrfase_dom"/>
</dbReference>
<dbReference type="InterPro" id="IPR029057">
    <property type="entry name" value="PRTase-like"/>
</dbReference>
<dbReference type="InterPro" id="IPR023747">
    <property type="entry name" value="Xanthine_Guanine_PRibTrfase"/>
</dbReference>
<dbReference type="NCBIfam" id="NF006613">
    <property type="entry name" value="PRK09177.1"/>
    <property type="match status" value="1"/>
</dbReference>
<dbReference type="PANTHER" id="PTHR39563">
    <property type="entry name" value="XANTHINE PHOSPHORIBOSYLTRANSFERASE"/>
    <property type="match status" value="1"/>
</dbReference>
<dbReference type="PANTHER" id="PTHR39563:SF1">
    <property type="entry name" value="XANTHINE-GUANINE PHOSPHORIBOSYLTRANSFERASE"/>
    <property type="match status" value="1"/>
</dbReference>
<dbReference type="Pfam" id="PF00156">
    <property type="entry name" value="Pribosyltran"/>
    <property type="match status" value="1"/>
</dbReference>
<dbReference type="SUPFAM" id="SSF53271">
    <property type="entry name" value="PRTase-like"/>
    <property type="match status" value="1"/>
</dbReference>
<dbReference type="PROSITE" id="PS00103">
    <property type="entry name" value="PUR_PYR_PR_TRANSFER"/>
    <property type="match status" value="1"/>
</dbReference>
<protein>
    <recommendedName>
        <fullName evidence="1">Xanthine-guanine phosphoribosyltransferase</fullName>
        <shortName evidence="1">XGPRT</shortName>
        <ecNumber evidence="1">2.4.2.-</ecNumber>
        <ecNumber evidence="1">2.4.2.22</ecNumber>
    </recommendedName>
    <alternativeName>
        <fullName evidence="1">Xanthine phosphoribosyltransferase</fullName>
    </alternativeName>
</protein>
<feature type="chain" id="PRO_1000070600" description="Xanthine-guanine phosphoribosyltransferase">
    <location>
        <begin position="1"/>
        <end position="157"/>
    </location>
</feature>
<feature type="binding site" evidence="1">
    <location>
        <begin position="42"/>
        <end position="43"/>
    </location>
    <ligand>
        <name>5-phospho-alpha-D-ribose 1-diphosphate</name>
        <dbReference type="ChEBI" id="CHEBI:58017"/>
    </ligand>
</feature>
<feature type="binding site" evidence="1">
    <location>
        <begin position="93"/>
        <end position="101"/>
    </location>
    <ligand>
        <name>5-phospho-alpha-D-ribose 1-diphosphate</name>
        <dbReference type="ChEBI" id="CHEBI:58017"/>
    </ligand>
</feature>
<feature type="binding site" evidence="1">
    <location>
        <position position="94"/>
    </location>
    <ligand>
        <name>Mg(2+)</name>
        <dbReference type="ChEBI" id="CHEBI:18420"/>
    </ligand>
</feature>
<feature type="binding site" evidence="1">
    <location>
        <begin position="97"/>
        <end position="101"/>
    </location>
    <ligand>
        <name>GMP</name>
        <dbReference type="ChEBI" id="CHEBI:58115"/>
    </ligand>
</feature>
<feature type="binding site" evidence="1">
    <location>
        <position position="97"/>
    </location>
    <ligand>
        <name>guanine</name>
        <dbReference type="ChEBI" id="CHEBI:16235"/>
    </ligand>
</feature>
<feature type="binding site" evidence="1">
    <location>
        <position position="97"/>
    </location>
    <ligand>
        <name>xanthine</name>
        <dbReference type="ChEBI" id="CHEBI:17712"/>
    </ligand>
</feature>
<feature type="binding site" evidence="1">
    <location>
        <begin position="139"/>
        <end position="140"/>
    </location>
    <ligand>
        <name>GMP</name>
        <dbReference type="ChEBI" id="CHEBI:58115"/>
    </ligand>
</feature>
<feature type="binding site" evidence="1">
    <location>
        <position position="140"/>
    </location>
    <ligand>
        <name>guanine</name>
        <dbReference type="ChEBI" id="CHEBI:16235"/>
    </ligand>
</feature>
<feature type="binding site" evidence="1">
    <location>
        <position position="140"/>
    </location>
    <ligand>
        <name>xanthine</name>
        <dbReference type="ChEBI" id="CHEBI:17712"/>
    </ligand>
</feature>